<sequence length="202" mass="23343">MSEEALGELSGYIRERLGDAIEEANLAYGELTLCVPVASLIGVLTFLRDDVQCQFVNLTDISGVDYPQREKRFDVVYQLLSPRQNQRIRVKVQADEDTLVPSAVPVFFGAEWYEREAYDMYGILFSGHPDLRRILTDYGFEGHPLRKDFPLTGFVEVRYNDELKRVVYEPVQLRQEFRNFDFLSPWEGTDYVLPGDEKAKTN</sequence>
<name>NUOC_BRUSI</name>
<organism>
    <name type="scientific">Brucella suis (strain ATCC 23445 / NCTC 10510)</name>
    <dbReference type="NCBI Taxonomy" id="470137"/>
    <lineage>
        <taxon>Bacteria</taxon>
        <taxon>Pseudomonadati</taxon>
        <taxon>Pseudomonadota</taxon>
        <taxon>Alphaproteobacteria</taxon>
        <taxon>Hyphomicrobiales</taxon>
        <taxon>Brucellaceae</taxon>
        <taxon>Brucella/Ochrobactrum group</taxon>
        <taxon>Brucella</taxon>
    </lineage>
</organism>
<protein>
    <recommendedName>
        <fullName evidence="1">NADH-quinone oxidoreductase subunit C</fullName>
        <ecNumber evidence="1">7.1.1.-</ecNumber>
    </recommendedName>
    <alternativeName>
        <fullName evidence="1">NADH dehydrogenase I subunit C</fullName>
    </alternativeName>
    <alternativeName>
        <fullName evidence="1">NDH-1 subunit C</fullName>
    </alternativeName>
</protein>
<proteinExistence type="inferred from homology"/>
<gene>
    <name evidence="1" type="primary">nuoC</name>
    <name type="ordered locus">BSUIS_A0843</name>
</gene>
<keyword id="KW-0997">Cell inner membrane</keyword>
<keyword id="KW-1003">Cell membrane</keyword>
<keyword id="KW-0472">Membrane</keyword>
<keyword id="KW-0520">NAD</keyword>
<keyword id="KW-0874">Quinone</keyword>
<keyword id="KW-1278">Translocase</keyword>
<keyword id="KW-0813">Transport</keyword>
<keyword id="KW-0830">Ubiquinone</keyword>
<evidence type="ECO:0000255" key="1">
    <source>
        <dbReference type="HAMAP-Rule" id="MF_01357"/>
    </source>
</evidence>
<comment type="function">
    <text evidence="1">NDH-1 shuttles electrons from NADH, via FMN and iron-sulfur (Fe-S) centers, to quinones in the respiratory chain. The immediate electron acceptor for the enzyme in this species is believed to be ubiquinone. Couples the redox reaction to proton translocation (for every two electrons transferred, four hydrogen ions are translocated across the cytoplasmic membrane), and thus conserves the redox energy in a proton gradient.</text>
</comment>
<comment type="catalytic activity">
    <reaction evidence="1">
        <text>a quinone + NADH + 5 H(+)(in) = a quinol + NAD(+) + 4 H(+)(out)</text>
        <dbReference type="Rhea" id="RHEA:57888"/>
        <dbReference type="ChEBI" id="CHEBI:15378"/>
        <dbReference type="ChEBI" id="CHEBI:24646"/>
        <dbReference type="ChEBI" id="CHEBI:57540"/>
        <dbReference type="ChEBI" id="CHEBI:57945"/>
        <dbReference type="ChEBI" id="CHEBI:132124"/>
    </reaction>
</comment>
<comment type="subunit">
    <text evidence="1">NDH-1 is composed of 14 different subunits. Subunits NuoB, C, D, E, F, and G constitute the peripheral sector of the complex.</text>
</comment>
<comment type="subcellular location">
    <subcellularLocation>
        <location evidence="1">Cell inner membrane</location>
        <topology evidence="1">Peripheral membrane protein</topology>
        <orientation evidence="1">Cytoplasmic side</orientation>
    </subcellularLocation>
</comment>
<comment type="similarity">
    <text evidence="1">Belongs to the complex I 30 kDa subunit family.</text>
</comment>
<reference key="1">
    <citation type="submission" date="2007-12" db="EMBL/GenBank/DDBJ databases">
        <title>Brucella suis ATCC 23445 whole genome shotgun sequencing project.</title>
        <authorList>
            <person name="Setubal J.C."/>
            <person name="Bowns C."/>
            <person name="Boyle S."/>
            <person name="Crasta O.R."/>
            <person name="Czar M.J."/>
            <person name="Dharmanolla C."/>
            <person name="Gillespie J.J."/>
            <person name="Kenyon R.W."/>
            <person name="Lu J."/>
            <person name="Mane S."/>
            <person name="Mohapatra S."/>
            <person name="Nagrani S."/>
            <person name="Purkayastha A."/>
            <person name="Rajasimha H.K."/>
            <person name="Shallom J.M."/>
            <person name="Shallom S."/>
            <person name="Shukla M."/>
            <person name="Snyder E.E."/>
            <person name="Sobral B.W."/>
            <person name="Wattam A.R."/>
            <person name="Will R."/>
            <person name="Williams K."/>
            <person name="Yoo H."/>
            <person name="Bruce D."/>
            <person name="Detter C."/>
            <person name="Munk C."/>
            <person name="Brettin T.S."/>
        </authorList>
    </citation>
    <scope>NUCLEOTIDE SEQUENCE [LARGE SCALE GENOMIC DNA]</scope>
    <source>
        <strain>ATCC 23445 / NCTC 10510</strain>
    </source>
</reference>
<accession>B0CLD1</accession>
<feature type="chain" id="PRO_0000358057" description="NADH-quinone oxidoreductase subunit C">
    <location>
        <begin position="1"/>
        <end position="202"/>
    </location>
</feature>
<dbReference type="EC" id="7.1.1.-" evidence="1"/>
<dbReference type="EMBL" id="CP000911">
    <property type="protein sequence ID" value="ABY37911.1"/>
    <property type="molecule type" value="Genomic_DNA"/>
</dbReference>
<dbReference type="RefSeq" id="WP_002967574.1">
    <property type="nucleotide sequence ID" value="NC_010169.1"/>
</dbReference>
<dbReference type="SMR" id="B0CLD1"/>
<dbReference type="KEGG" id="bmt:BSUIS_A0843"/>
<dbReference type="HOGENOM" id="CLU_042628_2_1_5"/>
<dbReference type="Proteomes" id="UP000008545">
    <property type="component" value="Chromosome I"/>
</dbReference>
<dbReference type="GO" id="GO:0005886">
    <property type="term" value="C:plasma membrane"/>
    <property type="evidence" value="ECO:0007669"/>
    <property type="project" value="UniProtKB-SubCell"/>
</dbReference>
<dbReference type="GO" id="GO:0008137">
    <property type="term" value="F:NADH dehydrogenase (ubiquinone) activity"/>
    <property type="evidence" value="ECO:0007669"/>
    <property type="project" value="InterPro"/>
</dbReference>
<dbReference type="GO" id="GO:0050136">
    <property type="term" value="F:NADH:ubiquinone reductase (non-electrogenic) activity"/>
    <property type="evidence" value="ECO:0007669"/>
    <property type="project" value="UniProtKB-UniRule"/>
</dbReference>
<dbReference type="GO" id="GO:0048038">
    <property type="term" value="F:quinone binding"/>
    <property type="evidence" value="ECO:0007669"/>
    <property type="project" value="UniProtKB-KW"/>
</dbReference>
<dbReference type="Gene3D" id="3.30.460.80">
    <property type="entry name" value="NADH:ubiquinone oxidoreductase, 30kDa subunit"/>
    <property type="match status" value="1"/>
</dbReference>
<dbReference type="HAMAP" id="MF_01357">
    <property type="entry name" value="NDH1_NuoC"/>
    <property type="match status" value="1"/>
</dbReference>
<dbReference type="InterPro" id="IPR010218">
    <property type="entry name" value="NADH_DH_suC"/>
</dbReference>
<dbReference type="InterPro" id="IPR037232">
    <property type="entry name" value="NADH_quin_OxRdtase_su_C/D-like"/>
</dbReference>
<dbReference type="InterPro" id="IPR001268">
    <property type="entry name" value="NADH_UbQ_OxRdtase_30kDa_su"/>
</dbReference>
<dbReference type="InterPro" id="IPR020396">
    <property type="entry name" value="NADH_UbQ_OxRdtase_CS"/>
</dbReference>
<dbReference type="NCBIfam" id="TIGR01961">
    <property type="entry name" value="NuoC_fam"/>
    <property type="match status" value="1"/>
</dbReference>
<dbReference type="NCBIfam" id="NF004730">
    <property type="entry name" value="PRK06074.1-1"/>
    <property type="match status" value="1"/>
</dbReference>
<dbReference type="NCBIfam" id="NF004733">
    <property type="entry name" value="PRK06074.1-5"/>
    <property type="match status" value="1"/>
</dbReference>
<dbReference type="PANTHER" id="PTHR10884:SF14">
    <property type="entry name" value="NADH DEHYDROGENASE [UBIQUINONE] IRON-SULFUR PROTEIN 3, MITOCHONDRIAL"/>
    <property type="match status" value="1"/>
</dbReference>
<dbReference type="PANTHER" id="PTHR10884">
    <property type="entry name" value="NADH DEHYDROGENASE UBIQUINONE IRON-SULFUR PROTEIN 3"/>
    <property type="match status" value="1"/>
</dbReference>
<dbReference type="Pfam" id="PF00329">
    <property type="entry name" value="Complex1_30kDa"/>
    <property type="match status" value="1"/>
</dbReference>
<dbReference type="SUPFAM" id="SSF143243">
    <property type="entry name" value="Nqo5-like"/>
    <property type="match status" value="1"/>
</dbReference>
<dbReference type="PROSITE" id="PS00542">
    <property type="entry name" value="COMPLEX1_30K"/>
    <property type="match status" value="1"/>
</dbReference>